<protein>
    <recommendedName>
        <fullName evidence="1">Putative pyruvate, phosphate dikinase regulatory protein</fullName>
        <shortName evidence="1">PPDK regulatory protein</shortName>
        <ecNumber evidence="1">2.7.11.32</ecNumber>
        <ecNumber evidence="1">2.7.4.27</ecNumber>
    </recommendedName>
</protein>
<comment type="function">
    <text evidence="1">Bifunctional serine/threonine kinase and phosphorylase involved in the regulation of the pyruvate, phosphate dikinase (PPDK) by catalyzing its phosphorylation/dephosphorylation.</text>
</comment>
<comment type="catalytic activity">
    <reaction evidence="1">
        <text>N(tele)-phospho-L-histidyl/L-threonyl-[pyruvate, phosphate dikinase] + ADP = N(tele)-phospho-L-histidyl/O-phospho-L-threonyl-[pyruvate, phosphate dikinase] + AMP + H(+)</text>
        <dbReference type="Rhea" id="RHEA:43692"/>
        <dbReference type="Rhea" id="RHEA-COMP:10650"/>
        <dbReference type="Rhea" id="RHEA-COMP:10651"/>
        <dbReference type="ChEBI" id="CHEBI:15378"/>
        <dbReference type="ChEBI" id="CHEBI:30013"/>
        <dbReference type="ChEBI" id="CHEBI:61977"/>
        <dbReference type="ChEBI" id="CHEBI:83586"/>
        <dbReference type="ChEBI" id="CHEBI:456215"/>
        <dbReference type="ChEBI" id="CHEBI:456216"/>
        <dbReference type="EC" id="2.7.11.32"/>
    </reaction>
</comment>
<comment type="catalytic activity">
    <reaction evidence="1">
        <text>N(tele)-phospho-L-histidyl/O-phospho-L-threonyl-[pyruvate, phosphate dikinase] + phosphate + H(+) = N(tele)-phospho-L-histidyl/L-threonyl-[pyruvate, phosphate dikinase] + diphosphate</text>
        <dbReference type="Rhea" id="RHEA:43696"/>
        <dbReference type="Rhea" id="RHEA-COMP:10650"/>
        <dbReference type="Rhea" id="RHEA-COMP:10651"/>
        <dbReference type="ChEBI" id="CHEBI:15378"/>
        <dbReference type="ChEBI" id="CHEBI:30013"/>
        <dbReference type="ChEBI" id="CHEBI:33019"/>
        <dbReference type="ChEBI" id="CHEBI:43474"/>
        <dbReference type="ChEBI" id="CHEBI:61977"/>
        <dbReference type="ChEBI" id="CHEBI:83586"/>
        <dbReference type="EC" id="2.7.4.27"/>
    </reaction>
</comment>
<comment type="similarity">
    <text evidence="1">Belongs to the pyruvate, phosphate/water dikinase regulatory protein family. PDRP subfamily.</text>
</comment>
<accession>O05337</accession>
<sequence>MEKIKIIVASDSIGETAELVARAGISQFNPKQCKNELLRYPYIESFEDVDEVIQVAKDTNAIIVYTLIKPEMKQYMSEKVAEFQLKSVDIMGPLMDLLSASVEEKPYNEPGIVHRLDDAYFKKIDAIEFAVKYDDGKDPKGLPKADIVLLGISRTSKTPLSQYLAHKSYKVMNVPIVPEVTPPDGLYDIDPKKCIALKISEEKLNRIRKERLKQLGLGDTARYATDQEELNYFEEIVSEIGCPVIDVSQKAIEETANDIIHYIEQNKSK</sequence>
<organism>
    <name type="scientific">Staphylococcus aureus</name>
    <dbReference type="NCBI Taxonomy" id="1280"/>
    <lineage>
        <taxon>Bacteria</taxon>
        <taxon>Bacillati</taxon>
        <taxon>Bacillota</taxon>
        <taxon>Bacilli</taxon>
        <taxon>Bacillales</taxon>
        <taxon>Staphylococcaceae</taxon>
        <taxon>Staphylococcus</taxon>
    </lineage>
</organism>
<proteinExistence type="inferred from homology"/>
<dbReference type="EC" id="2.7.11.32" evidence="1"/>
<dbReference type="EC" id="2.7.4.27" evidence="1"/>
<dbReference type="EMBL" id="AB001896">
    <property type="protein sequence ID" value="BAA19492.1"/>
    <property type="molecule type" value="Genomic_DNA"/>
</dbReference>
<dbReference type="SMR" id="O05337"/>
<dbReference type="GO" id="GO:0043531">
    <property type="term" value="F:ADP binding"/>
    <property type="evidence" value="ECO:0007669"/>
    <property type="project" value="UniProtKB-UniRule"/>
</dbReference>
<dbReference type="GO" id="GO:0005524">
    <property type="term" value="F:ATP binding"/>
    <property type="evidence" value="ECO:0007669"/>
    <property type="project" value="InterPro"/>
</dbReference>
<dbReference type="GO" id="GO:0016776">
    <property type="term" value="F:phosphotransferase activity, phosphate group as acceptor"/>
    <property type="evidence" value="ECO:0007669"/>
    <property type="project" value="UniProtKB-UniRule"/>
</dbReference>
<dbReference type="GO" id="GO:0004674">
    <property type="term" value="F:protein serine/threonine kinase activity"/>
    <property type="evidence" value="ECO:0007669"/>
    <property type="project" value="UniProtKB-UniRule"/>
</dbReference>
<dbReference type="HAMAP" id="MF_00921">
    <property type="entry name" value="PDRP"/>
    <property type="match status" value="1"/>
</dbReference>
<dbReference type="InterPro" id="IPR005177">
    <property type="entry name" value="Kinase-pyrophosphorylase"/>
</dbReference>
<dbReference type="InterPro" id="IPR026565">
    <property type="entry name" value="PPDK_reg"/>
</dbReference>
<dbReference type="NCBIfam" id="NF003742">
    <property type="entry name" value="PRK05339.1"/>
    <property type="match status" value="1"/>
</dbReference>
<dbReference type="PANTHER" id="PTHR31756">
    <property type="entry name" value="PYRUVATE, PHOSPHATE DIKINASE REGULATORY PROTEIN 1, CHLOROPLASTIC"/>
    <property type="match status" value="1"/>
</dbReference>
<dbReference type="PANTHER" id="PTHR31756:SF3">
    <property type="entry name" value="PYRUVATE, PHOSPHATE DIKINASE REGULATORY PROTEIN 1, CHLOROPLASTIC"/>
    <property type="match status" value="1"/>
</dbReference>
<dbReference type="Pfam" id="PF03618">
    <property type="entry name" value="Kinase-PPPase"/>
    <property type="match status" value="1"/>
</dbReference>
<reference key="1">
    <citation type="submission" date="1997-03" db="EMBL/GenBank/DDBJ databases">
        <title>Sigma70 operon in Staphylococcus aureus.</title>
        <authorList>
            <person name="Owada J."/>
            <person name="Ideno H."/>
            <person name="Ohta T."/>
        </authorList>
    </citation>
    <scope>NUCLEOTIDE SEQUENCE [GENOMIC DNA]</scope>
    <source>
        <strain>912</strain>
    </source>
</reference>
<name>PDRP_STAAU</name>
<feature type="chain" id="PRO_0000196714" description="Putative pyruvate, phosphate dikinase regulatory protein">
    <location>
        <begin position="1"/>
        <end position="269"/>
    </location>
</feature>
<feature type="binding site" evidence="1">
    <location>
        <begin position="151"/>
        <end position="158"/>
    </location>
    <ligand>
        <name>ADP</name>
        <dbReference type="ChEBI" id="CHEBI:456216"/>
    </ligand>
</feature>
<evidence type="ECO:0000255" key="1">
    <source>
        <dbReference type="HAMAP-Rule" id="MF_00921"/>
    </source>
</evidence>
<keyword id="KW-0418">Kinase</keyword>
<keyword id="KW-0547">Nucleotide-binding</keyword>
<keyword id="KW-0723">Serine/threonine-protein kinase</keyword>
<keyword id="KW-0808">Transferase</keyword>